<keyword id="KW-0326">Glycosidase</keyword>
<keyword id="KW-0378">Hydrolase</keyword>
<keyword id="KW-1185">Reference proteome</keyword>
<keyword id="KW-0964">Secreted</keyword>
<keyword id="KW-0732">Signal</keyword>
<protein>
    <recommendedName>
        <fullName>Probable transglycosylase IsaA</fullName>
        <ecNumber>3.2.-.-</ecNumber>
    </recommendedName>
    <alternativeName>
        <fullName>Immunodominant staphylococcal antigen A</fullName>
    </alternativeName>
</protein>
<evidence type="ECO:0000250" key="1"/>
<evidence type="ECO:0000255" key="2"/>
<evidence type="ECO:0000256" key="3">
    <source>
        <dbReference type="SAM" id="MobiDB-lite"/>
    </source>
</evidence>
<evidence type="ECO:0000305" key="4"/>
<gene>
    <name type="primary">isaA</name>
    <name type="ordered locus">SERP2138</name>
</gene>
<accession>Q5HL49</accession>
<proteinExistence type="inferred from homology"/>
<dbReference type="EC" id="3.2.-.-"/>
<dbReference type="EMBL" id="CP000029">
    <property type="protein sequence ID" value="AAW53038.1"/>
    <property type="molecule type" value="Genomic_DNA"/>
</dbReference>
<dbReference type="RefSeq" id="WP_002438072.1">
    <property type="nucleotide sequence ID" value="NC_002976.3"/>
</dbReference>
<dbReference type="STRING" id="176279.SERP2138"/>
<dbReference type="KEGG" id="ser:SERP2138"/>
<dbReference type="eggNOG" id="COG0741">
    <property type="taxonomic scope" value="Bacteria"/>
</dbReference>
<dbReference type="HOGENOM" id="CLU_099865_0_0_9"/>
<dbReference type="Proteomes" id="UP000000531">
    <property type="component" value="Chromosome"/>
</dbReference>
<dbReference type="GO" id="GO:0005576">
    <property type="term" value="C:extracellular region"/>
    <property type="evidence" value="ECO:0007669"/>
    <property type="project" value="UniProtKB-SubCell"/>
</dbReference>
<dbReference type="GO" id="GO:0016798">
    <property type="term" value="F:hydrolase activity, acting on glycosyl bonds"/>
    <property type="evidence" value="ECO:0007669"/>
    <property type="project" value="UniProtKB-KW"/>
</dbReference>
<dbReference type="Gene3D" id="1.10.530.10">
    <property type="match status" value="1"/>
</dbReference>
<dbReference type="InterPro" id="IPR023346">
    <property type="entry name" value="Lysozyme-like_dom_sf"/>
</dbReference>
<dbReference type="SUPFAM" id="SSF53955">
    <property type="entry name" value="Lysozyme-like"/>
    <property type="match status" value="1"/>
</dbReference>
<reference key="1">
    <citation type="journal article" date="2005" name="J. Bacteriol.">
        <title>Insights on evolution of virulence and resistance from the complete genome analysis of an early methicillin-resistant Staphylococcus aureus strain and a biofilm-producing methicillin-resistant Staphylococcus epidermidis strain.</title>
        <authorList>
            <person name="Gill S.R."/>
            <person name="Fouts D.E."/>
            <person name="Archer G.L."/>
            <person name="Mongodin E.F."/>
            <person name="DeBoy R.T."/>
            <person name="Ravel J."/>
            <person name="Paulsen I.T."/>
            <person name="Kolonay J.F."/>
            <person name="Brinkac L.M."/>
            <person name="Beanan M.J."/>
            <person name="Dodson R.J."/>
            <person name="Daugherty S.C."/>
            <person name="Madupu R."/>
            <person name="Angiuoli S.V."/>
            <person name="Durkin A.S."/>
            <person name="Haft D.H."/>
            <person name="Vamathevan J.J."/>
            <person name="Khouri H."/>
            <person name="Utterback T.R."/>
            <person name="Lee C."/>
            <person name="Dimitrov G."/>
            <person name="Jiang L."/>
            <person name="Qin H."/>
            <person name="Weidman J."/>
            <person name="Tran K."/>
            <person name="Kang K.H."/>
            <person name="Hance I.R."/>
            <person name="Nelson K.E."/>
            <person name="Fraser C.M."/>
        </authorList>
    </citation>
    <scope>NUCLEOTIDE SEQUENCE [LARGE SCALE GENOMIC DNA]</scope>
    <source>
        <strain>ATCC 35984 / DSM 28319 / BCRC 17069 / CCUG 31568 / BM 3577 / RP62A</strain>
    </source>
</reference>
<sequence>MKKTVIASTLAVSLGIAGYGLSGHEAHASETTNVDKAHLVDLAQHNPEELNAKPVQAGAYDIHFVDNGYQYNFTSNGSEWSWSYAVAGSDADYTESSSNQEVSANTQSSNTNVQAVSAPTSSESRSYSTSTTSYSAPSHNYSSHSSSVRLSNGNTAGSVGSYAAAQMAARTGVSASTWEHIIARESNGQLHARNASGAAGLFQTMPGWGSTGSVNDQINAAYKAYKAQGLSAWGM</sequence>
<name>ISAA_STAEQ</name>
<feature type="signal peptide" evidence="2">
    <location>
        <begin position="1"/>
        <end position="28"/>
    </location>
</feature>
<feature type="chain" id="PRO_0000045205" description="Probable transglycosylase IsaA">
    <location>
        <begin position="29"/>
        <end position="235"/>
    </location>
</feature>
<feature type="region of interest" description="Disordered" evidence="3">
    <location>
        <begin position="95"/>
        <end position="150"/>
    </location>
</feature>
<feature type="compositionally biased region" description="Polar residues" evidence="3">
    <location>
        <begin position="95"/>
        <end position="115"/>
    </location>
</feature>
<feature type="compositionally biased region" description="Low complexity" evidence="3">
    <location>
        <begin position="117"/>
        <end position="147"/>
    </location>
</feature>
<organism>
    <name type="scientific">Staphylococcus epidermidis (strain ATCC 35984 / DSM 28319 / BCRC 17069 / CCUG 31568 / BM 3577 / RP62A)</name>
    <dbReference type="NCBI Taxonomy" id="176279"/>
    <lineage>
        <taxon>Bacteria</taxon>
        <taxon>Bacillati</taxon>
        <taxon>Bacillota</taxon>
        <taxon>Bacilli</taxon>
        <taxon>Bacillales</taxon>
        <taxon>Staphylococcaceae</taxon>
        <taxon>Staphylococcus</taxon>
    </lineage>
</organism>
<comment type="function">
    <text evidence="1">Is able to cleave peptidoglycan.</text>
</comment>
<comment type="subcellular location">
    <subcellularLocation>
        <location evidence="1">Secreted</location>
    </subcellularLocation>
</comment>
<comment type="similarity">
    <text evidence="4">Belongs to the transglycosylase family. IsaA subfamily.</text>
</comment>